<dbReference type="EC" id="2.5.1.78" evidence="1"/>
<dbReference type="EMBL" id="CP000750">
    <property type="protein sequence ID" value="ABS04441.1"/>
    <property type="molecule type" value="Genomic_DNA"/>
</dbReference>
<dbReference type="RefSeq" id="WP_012087312.1">
    <property type="nucleotide sequence ID" value="NC_009664.2"/>
</dbReference>
<dbReference type="SMR" id="A6WCA2"/>
<dbReference type="STRING" id="266940.Krad_2977"/>
<dbReference type="KEGG" id="kra:Krad_2977"/>
<dbReference type="eggNOG" id="COG0054">
    <property type="taxonomic scope" value="Bacteria"/>
</dbReference>
<dbReference type="HOGENOM" id="CLU_089358_1_1_11"/>
<dbReference type="OrthoDB" id="9809709at2"/>
<dbReference type="UniPathway" id="UPA00275">
    <property type="reaction ID" value="UER00404"/>
</dbReference>
<dbReference type="Proteomes" id="UP000001116">
    <property type="component" value="Chromosome"/>
</dbReference>
<dbReference type="GO" id="GO:0005829">
    <property type="term" value="C:cytosol"/>
    <property type="evidence" value="ECO:0007669"/>
    <property type="project" value="TreeGrafter"/>
</dbReference>
<dbReference type="GO" id="GO:0009349">
    <property type="term" value="C:riboflavin synthase complex"/>
    <property type="evidence" value="ECO:0007669"/>
    <property type="project" value="InterPro"/>
</dbReference>
<dbReference type="GO" id="GO:0000906">
    <property type="term" value="F:6,7-dimethyl-8-ribityllumazine synthase activity"/>
    <property type="evidence" value="ECO:0007669"/>
    <property type="project" value="UniProtKB-UniRule"/>
</dbReference>
<dbReference type="GO" id="GO:0009231">
    <property type="term" value="P:riboflavin biosynthetic process"/>
    <property type="evidence" value="ECO:0007669"/>
    <property type="project" value="UniProtKB-UniRule"/>
</dbReference>
<dbReference type="CDD" id="cd09209">
    <property type="entry name" value="Lumazine_synthase-I"/>
    <property type="match status" value="1"/>
</dbReference>
<dbReference type="Gene3D" id="3.40.50.960">
    <property type="entry name" value="Lumazine/riboflavin synthase"/>
    <property type="match status" value="1"/>
</dbReference>
<dbReference type="HAMAP" id="MF_00178">
    <property type="entry name" value="Lumazine_synth"/>
    <property type="match status" value="1"/>
</dbReference>
<dbReference type="InterPro" id="IPR034964">
    <property type="entry name" value="LS"/>
</dbReference>
<dbReference type="InterPro" id="IPR002180">
    <property type="entry name" value="LS/RS"/>
</dbReference>
<dbReference type="InterPro" id="IPR036467">
    <property type="entry name" value="LS/RS_sf"/>
</dbReference>
<dbReference type="NCBIfam" id="TIGR00114">
    <property type="entry name" value="lumazine-synth"/>
    <property type="match status" value="1"/>
</dbReference>
<dbReference type="PANTHER" id="PTHR21058:SF0">
    <property type="entry name" value="6,7-DIMETHYL-8-RIBITYLLUMAZINE SYNTHASE"/>
    <property type="match status" value="1"/>
</dbReference>
<dbReference type="PANTHER" id="PTHR21058">
    <property type="entry name" value="6,7-DIMETHYL-8-RIBITYLLUMAZINE SYNTHASE DMRL SYNTHASE LUMAZINE SYNTHASE"/>
    <property type="match status" value="1"/>
</dbReference>
<dbReference type="Pfam" id="PF00885">
    <property type="entry name" value="DMRL_synthase"/>
    <property type="match status" value="1"/>
</dbReference>
<dbReference type="SUPFAM" id="SSF52121">
    <property type="entry name" value="Lumazine synthase"/>
    <property type="match status" value="1"/>
</dbReference>
<feature type="chain" id="PRO_1000077237" description="6,7-dimethyl-8-ribityllumazine synthase">
    <location>
        <begin position="1"/>
        <end position="161"/>
    </location>
</feature>
<feature type="active site" description="Proton donor" evidence="1">
    <location>
        <position position="88"/>
    </location>
</feature>
<feature type="binding site" evidence="1">
    <location>
        <position position="25"/>
    </location>
    <ligand>
        <name>5-amino-6-(D-ribitylamino)uracil</name>
        <dbReference type="ChEBI" id="CHEBI:15934"/>
    </ligand>
</feature>
<feature type="binding site" evidence="1">
    <location>
        <begin position="57"/>
        <end position="59"/>
    </location>
    <ligand>
        <name>5-amino-6-(D-ribitylamino)uracil</name>
        <dbReference type="ChEBI" id="CHEBI:15934"/>
    </ligand>
</feature>
<feature type="binding site" evidence="1">
    <location>
        <begin position="80"/>
        <end position="82"/>
    </location>
    <ligand>
        <name>5-amino-6-(D-ribitylamino)uracil</name>
        <dbReference type="ChEBI" id="CHEBI:15934"/>
    </ligand>
</feature>
<feature type="binding site" evidence="1">
    <location>
        <begin position="85"/>
        <end position="86"/>
    </location>
    <ligand>
        <name>(2S)-2-hydroxy-3-oxobutyl phosphate</name>
        <dbReference type="ChEBI" id="CHEBI:58830"/>
    </ligand>
</feature>
<feature type="binding site" evidence="1">
    <location>
        <position position="113"/>
    </location>
    <ligand>
        <name>5-amino-6-(D-ribitylamino)uracil</name>
        <dbReference type="ChEBI" id="CHEBI:15934"/>
    </ligand>
</feature>
<feature type="binding site" evidence="1">
    <location>
        <position position="127"/>
    </location>
    <ligand>
        <name>(2S)-2-hydroxy-3-oxobutyl phosphate</name>
        <dbReference type="ChEBI" id="CHEBI:58830"/>
    </ligand>
</feature>
<proteinExistence type="inferred from homology"/>
<evidence type="ECO:0000255" key="1">
    <source>
        <dbReference type="HAMAP-Rule" id="MF_00178"/>
    </source>
</evidence>
<protein>
    <recommendedName>
        <fullName evidence="1">6,7-dimethyl-8-ribityllumazine synthase</fullName>
        <shortName evidence="1">DMRL synthase</shortName>
        <shortName evidence="1">LS</shortName>
        <shortName evidence="1">Lumazine synthase</shortName>
        <ecNumber evidence="1">2.5.1.78</ecNumber>
    </recommendedName>
</protein>
<comment type="function">
    <text evidence="1">Catalyzes the formation of 6,7-dimethyl-8-ribityllumazine by condensation of 5-amino-6-(D-ribitylamino)uracil with 3,4-dihydroxy-2-butanone 4-phosphate. This is the penultimate step in the biosynthesis of riboflavin.</text>
</comment>
<comment type="catalytic activity">
    <reaction evidence="1">
        <text>(2S)-2-hydroxy-3-oxobutyl phosphate + 5-amino-6-(D-ribitylamino)uracil = 6,7-dimethyl-8-(1-D-ribityl)lumazine + phosphate + 2 H2O + H(+)</text>
        <dbReference type="Rhea" id="RHEA:26152"/>
        <dbReference type="ChEBI" id="CHEBI:15377"/>
        <dbReference type="ChEBI" id="CHEBI:15378"/>
        <dbReference type="ChEBI" id="CHEBI:15934"/>
        <dbReference type="ChEBI" id="CHEBI:43474"/>
        <dbReference type="ChEBI" id="CHEBI:58201"/>
        <dbReference type="ChEBI" id="CHEBI:58830"/>
        <dbReference type="EC" id="2.5.1.78"/>
    </reaction>
</comment>
<comment type="pathway">
    <text evidence="1">Cofactor biosynthesis; riboflavin biosynthesis; riboflavin from 2-hydroxy-3-oxobutyl phosphate and 5-amino-6-(D-ribitylamino)uracil: step 1/2.</text>
</comment>
<comment type="similarity">
    <text evidence="1">Belongs to the DMRL synthase family.</text>
</comment>
<reference key="1">
    <citation type="journal article" date="2008" name="PLoS ONE">
        <title>Survival in nuclear waste, extreme resistance, and potential applications gleaned from the genome sequence of Kineococcus radiotolerans SRS30216.</title>
        <authorList>
            <person name="Bagwell C.E."/>
            <person name="Bhat S."/>
            <person name="Hawkins G.M."/>
            <person name="Smith B.W."/>
            <person name="Biswas T."/>
            <person name="Hoover T.R."/>
            <person name="Saunders E."/>
            <person name="Han C.S."/>
            <person name="Tsodikov O.V."/>
            <person name="Shimkets L.J."/>
        </authorList>
    </citation>
    <scope>NUCLEOTIDE SEQUENCE [LARGE SCALE GENOMIC DNA]</scope>
    <source>
        <strain>ATCC BAA-149 / DSM 14245 / SRS30216</strain>
    </source>
</reference>
<organism>
    <name type="scientific">Kineococcus radiotolerans (strain ATCC BAA-149 / DSM 14245 / SRS30216)</name>
    <dbReference type="NCBI Taxonomy" id="266940"/>
    <lineage>
        <taxon>Bacteria</taxon>
        <taxon>Bacillati</taxon>
        <taxon>Actinomycetota</taxon>
        <taxon>Actinomycetes</taxon>
        <taxon>Kineosporiales</taxon>
        <taxon>Kineosporiaceae</taxon>
        <taxon>Kineococcus</taxon>
    </lineage>
</organism>
<sequence>MSGDGSPEIEVDGSGLRVAVVAARWHAETMDGLLAGARRALEASGVTEVTEVRVPGAFELPVAAARLARAGHDAVVALGVVIRGGTPHFDYVCDAATQGLTQVAVTTGVPIGFGVLTVDNEAQALHRAGLRGSREDKGAEAVLAALETVVALRGVAPLPQG</sequence>
<keyword id="KW-1185">Reference proteome</keyword>
<keyword id="KW-0686">Riboflavin biosynthesis</keyword>
<keyword id="KW-0808">Transferase</keyword>
<gene>
    <name evidence="1" type="primary">ribH</name>
    <name type="ordered locus">Krad_2977</name>
</gene>
<name>RISB_KINRD</name>
<accession>A6WCA2</accession>